<keyword id="KW-0489">Methyltransferase</keyword>
<keyword id="KW-1185">Reference proteome</keyword>
<keyword id="KW-0808">Transferase</keyword>
<organism>
    <name type="scientific">Caenorhabditis elegans</name>
    <dbReference type="NCBI Taxonomy" id="6239"/>
    <lineage>
        <taxon>Eukaryota</taxon>
        <taxon>Metazoa</taxon>
        <taxon>Ecdysozoa</taxon>
        <taxon>Nematoda</taxon>
        <taxon>Chromadorea</taxon>
        <taxon>Rhabditida</taxon>
        <taxon>Rhabditina</taxon>
        <taxon>Rhabditomorpha</taxon>
        <taxon>Rhabditoidea</taxon>
        <taxon>Rhabditidae</taxon>
        <taxon>Peloderinae</taxon>
        <taxon>Caenorhabditis</taxon>
    </lineage>
</organism>
<name>ETKMT_CAEEL</name>
<dbReference type="EC" id="2.1.1.-"/>
<dbReference type="EMBL" id="FO080805">
    <property type="protein sequence ID" value="CCD66925.1"/>
    <property type="molecule type" value="Genomic_DNA"/>
</dbReference>
<dbReference type="PIR" id="T30158">
    <property type="entry name" value="T30158"/>
</dbReference>
<dbReference type="SMR" id="O01503"/>
<dbReference type="FunCoup" id="O01503">
    <property type="interactions" value="111"/>
</dbReference>
<dbReference type="STRING" id="6239.C37A2.6.1"/>
<dbReference type="PaxDb" id="6239-C37A2.6"/>
<dbReference type="PeptideAtlas" id="O01503"/>
<dbReference type="EnsemblMetazoa" id="C37A2.6.1">
    <property type="protein sequence ID" value="C37A2.6.1"/>
    <property type="gene ID" value="WBGene00016492"/>
</dbReference>
<dbReference type="KEGG" id="cel:CELE_C37A2.6"/>
<dbReference type="UCSC" id="C37A2.6">
    <property type="organism name" value="c. elegans"/>
</dbReference>
<dbReference type="AGR" id="WB:WBGene00016492"/>
<dbReference type="CTD" id="183284"/>
<dbReference type="WormBase" id="C37A2.6">
    <property type="protein sequence ID" value="CE40194"/>
    <property type="gene ID" value="WBGene00016492"/>
</dbReference>
<dbReference type="eggNOG" id="ENOG502QUSY">
    <property type="taxonomic scope" value="Eukaryota"/>
</dbReference>
<dbReference type="GeneTree" id="ENSGT00940000163501"/>
<dbReference type="HOGENOM" id="CLU_074455_2_0_1"/>
<dbReference type="InParanoid" id="O01503"/>
<dbReference type="OMA" id="RQENYGL"/>
<dbReference type="OrthoDB" id="194386at2759"/>
<dbReference type="PhylomeDB" id="O01503"/>
<dbReference type="Reactome" id="R-CEL-8876725">
    <property type="pathway name" value="Protein methylation"/>
</dbReference>
<dbReference type="PRO" id="PR:O01503"/>
<dbReference type="Proteomes" id="UP000001940">
    <property type="component" value="Chromosome I"/>
</dbReference>
<dbReference type="Bgee" id="WBGene00016492">
    <property type="expression patterns" value="Expressed in germ line (C elegans) and 4 other cell types or tissues"/>
</dbReference>
<dbReference type="GO" id="GO:0005759">
    <property type="term" value="C:mitochondrial matrix"/>
    <property type="evidence" value="ECO:0000318"/>
    <property type="project" value="GO_Central"/>
</dbReference>
<dbReference type="GO" id="GO:0016279">
    <property type="term" value="F:protein-lysine N-methyltransferase activity"/>
    <property type="evidence" value="ECO:0000318"/>
    <property type="project" value="GO_Central"/>
</dbReference>
<dbReference type="GO" id="GO:0032259">
    <property type="term" value="P:methylation"/>
    <property type="evidence" value="ECO:0007669"/>
    <property type="project" value="UniProtKB-KW"/>
</dbReference>
<dbReference type="GO" id="GO:1904736">
    <property type="term" value="P:negative regulation of fatty acid beta-oxidation using acyl-CoA dehydrogenase"/>
    <property type="evidence" value="ECO:0000318"/>
    <property type="project" value="GO_Central"/>
</dbReference>
<dbReference type="Gene3D" id="3.40.50.150">
    <property type="entry name" value="Vaccinia Virus protein VP39"/>
    <property type="match status" value="1"/>
</dbReference>
<dbReference type="InterPro" id="IPR050078">
    <property type="entry name" value="Ribosomal_L11_MeTrfase_PrmA"/>
</dbReference>
<dbReference type="InterPro" id="IPR029063">
    <property type="entry name" value="SAM-dependent_MTases_sf"/>
</dbReference>
<dbReference type="PANTHER" id="PTHR43648">
    <property type="entry name" value="ELECTRON TRANSFER FLAVOPROTEIN BETA SUBUNIT LYSINE METHYLTRANSFERASE"/>
    <property type="match status" value="1"/>
</dbReference>
<dbReference type="PANTHER" id="PTHR43648:SF1">
    <property type="entry name" value="ELECTRON TRANSFER FLAVOPROTEIN BETA SUBUNIT LYSINE METHYLTRANSFERASE"/>
    <property type="match status" value="1"/>
</dbReference>
<dbReference type="Pfam" id="PF06325">
    <property type="entry name" value="PrmA"/>
    <property type="match status" value="1"/>
</dbReference>
<dbReference type="SUPFAM" id="SSF53335">
    <property type="entry name" value="S-adenosyl-L-methionine-dependent methyltransferases"/>
    <property type="match status" value="1"/>
</dbReference>
<sequence>MLKPSLNAAAKWMIRNTIVSNESLTPEINLHLITIASPLWMSTPDACPLPDPYWAFYWPGGQGLSRFILDNKPLFQGSEIVDFGAGCGSASISASICGAKKILANDIDRYALLSTKLNFHLNNLRDSKIQYSSINFLDDKNERMSTQFFTDSKNIRKFILLGDMFYDSDFAELLFSWLKKIQDAHMVRVLVGDPDRHPLAESEYLQRYKTKFTKNQLAEFSLPGYVIKEHYGFNTAKVFELKFQ</sequence>
<gene>
    <name type="ORF">C37A2.6</name>
</gene>
<proteinExistence type="inferred from homology"/>
<protein>
    <recommendedName>
        <fullName evidence="2">Electron transfer flavoprotein beta subunit lysine methyltransferase homolog</fullName>
        <ecNumber>2.1.1.-</ecNumber>
    </recommendedName>
    <alternativeName>
        <fullName>ETFB lysine methyltransferase</fullName>
        <shortName>ETFB-KMT</shortName>
    </alternativeName>
    <alternativeName>
        <fullName>Methyltransferase-like protein 20</fullName>
    </alternativeName>
    <alternativeName>
        <fullName>Protein N-lysine methyltransferase METTL20</fullName>
    </alternativeName>
</protein>
<evidence type="ECO:0000250" key="1"/>
<evidence type="ECO:0000305" key="2"/>
<accession>O01503</accession>
<feature type="chain" id="PRO_0000318714" description="Electron transfer flavoprotein beta subunit lysine methyltransferase homolog">
    <location>
        <begin position="1"/>
        <end position="244"/>
    </location>
</feature>
<reference key="1">
    <citation type="journal article" date="1998" name="Science">
        <title>Genome sequence of the nematode C. elegans: a platform for investigating biology.</title>
        <authorList>
            <consortium name="The C. elegans sequencing consortium"/>
        </authorList>
    </citation>
    <scope>NUCLEOTIDE SEQUENCE [LARGE SCALE GENOMIC DNA]</scope>
    <source>
        <strain>Bristol N2</strain>
    </source>
</reference>
<comment type="function">
    <text evidence="1">Probable methyltransferase.</text>
</comment>
<comment type="similarity">
    <text evidence="2">Belongs to the methyltransferase superfamily. ETFBKMT family.</text>
</comment>